<keyword id="KW-0058">Aromatic hydrocarbons catabolism</keyword>
<keyword id="KW-0456">Lyase</keyword>
<keyword id="KW-0464">Manganese</keyword>
<keyword id="KW-0479">Metal-binding</keyword>
<reference key="1">
    <citation type="journal article" date="2009" name="PLoS Genet.">
        <title>Organised genome dynamics in the Escherichia coli species results in highly diverse adaptive paths.</title>
        <authorList>
            <person name="Touchon M."/>
            <person name="Hoede C."/>
            <person name="Tenaillon O."/>
            <person name="Barbe V."/>
            <person name="Baeriswyl S."/>
            <person name="Bidet P."/>
            <person name="Bingen E."/>
            <person name="Bonacorsi S."/>
            <person name="Bouchier C."/>
            <person name="Bouvet O."/>
            <person name="Calteau A."/>
            <person name="Chiapello H."/>
            <person name="Clermont O."/>
            <person name="Cruveiller S."/>
            <person name="Danchin A."/>
            <person name="Diard M."/>
            <person name="Dossat C."/>
            <person name="Karoui M.E."/>
            <person name="Frapy E."/>
            <person name="Garry L."/>
            <person name="Ghigo J.M."/>
            <person name="Gilles A.M."/>
            <person name="Johnson J."/>
            <person name="Le Bouguenec C."/>
            <person name="Lescat M."/>
            <person name="Mangenot S."/>
            <person name="Martinez-Jehanne V."/>
            <person name="Matic I."/>
            <person name="Nassif X."/>
            <person name="Oztas S."/>
            <person name="Petit M.A."/>
            <person name="Pichon C."/>
            <person name="Rouy Z."/>
            <person name="Ruf C.S."/>
            <person name="Schneider D."/>
            <person name="Tourret J."/>
            <person name="Vacherie B."/>
            <person name="Vallenet D."/>
            <person name="Medigue C."/>
            <person name="Rocha E.P.C."/>
            <person name="Denamur E."/>
        </authorList>
    </citation>
    <scope>NUCLEOTIDE SEQUENCE [LARGE SCALE GENOMIC DNA]</scope>
    <source>
        <strain>IAI1</strain>
    </source>
</reference>
<gene>
    <name evidence="1" type="primary">mhpE</name>
    <name type="ordered locus">ECIAI1_0353</name>
</gene>
<comment type="function">
    <text evidence="1">Catalyzes the retro-aldol cleavage of 4-hydroxy-2-oxopentanoate to pyruvate and acetaldehyde. Is involved in the meta-cleavage pathway for the degradation of aromatic compounds.</text>
</comment>
<comment type="catalytic activity">
    <reaction evidence="1">
        <text>(S)-4-hydroxy-2-oxopentanoate = acetaldehyde + pyruvate</text>
        <dbReference type="Rhea" id="RHEA:22624"/>
        <dbReference type="ChEBI" id="CHEBI:15343"/>
        <dbReference type="ChEBI" id="CHEBI:15361"/>
        <dbReference type="ChEBI" id="CHEBI:73143"/>
        <dbReference type="EC" id="4.1.3.39"/>
    </reaction>
</comment>
<comment type="pathway">
    <text evidence="1">Aromatic compound metabolism; 3-phenylpropanoate degradation.</text>
</comment>
<comment type="subunit">
    <text evidence="1">Interacts with MhpF.</text>
</comment>
<comment type="similarity">
    <text evidence="1">Belongs to the 4-hydroxy-2-oxovalerate aldolase family.</text>
</comment>
<name>HOA_ECO8A</name>
<evidence type="ECO:0000255" key="1">
    <source>
        <dbReference type="HAMAP-Rule" id="MF_01656"/>
    </source>
</evidence>
<protein>
    <recommendedName>
        <fullName evidence="1">4-hydroxy-2-oxovalerate aldolase</fullName>
        <shortName evidence="1">HOA</shortName>
        <ecNumber evidence="1">4.1.3.39</ecNumber>
    </recommendedName>
    <alternativeName>
        <fullName evidence="1">4-hydroxy-2-keto-pentanoic acid aldolase</fullName>
    </alternativeName>
    <alternativeName>
        <fullName evidence="1">4-hydroxy-2-oxopentanoate aldolase</fullName>
    </alternativeName>
</protein>
<accession>B7M300</accession>
<dbReference type="EC" id="4.1.3.39" evidence="1"/>
<dbReference type="EMBL" id="CU928160">
    <property type="protein sequence ID" value="CAQ97227.1"/>
    <property type="molecule type" value="Genomic_DNA"/>
</dbReference>
<dbReference type="RefSeq" id="WP_001013499.1">
    <property type="nucleotide sequence ID" value="NC_011741.1"/>
</dbReference>
<dbReference type="SMR" id="B7M300"/>
<dbReference type="GeneID" id="75202515"/>
<dbReference type="KEGG" id="ecr:ECIAI1_0353"/>
<dbReference type="HOGENOM" id="CLU_049173_0_0_6"/>
<dbReference type="UniPathway" id="UPA00714"/>
<dbReference type="GO" id="GO:0003852">
    <property type="term" value="F:2-isopropylmalate synthase activity"/>
    <property type="evidence" value="ECO:0007669"/>
    <property type="project" value="TreeGrafter"/>
</dbReference>
<dbReference type="GO" id="GO:0008701">
    <property type="term" value="F:4-hydroxy-2-oxovalerate aldolase activity"/>
    <property type="evidence" value="ECO:0007669"/>
    <property type="project" value="UniProtKB-UniRule"/>
</dbReference>
<dbReference type="GO" id="GO:0030145">
    <property type="term" value="F:manganese ion binding"/>
    <property type="evidence" value="ECO:0007669"/>
    <property type="project" value="UniProtKB-UniRule"/>
</dbReference>
<dbReference type="GO" id="GO:0019380">
    <property type="term" value="P:3-phenylpropionate catabolic process"/>
    <property type="evidence" value="ECO:0007669"/>
    <property type="project" value="UniProtKB-UniRule"/>
</dbReference>
<dbReference type="GO" id="GO:0009098">
    <property type="term" value="P:L-leucine biosynthetic process"/>
    <property type="evidence" value="ECO:0007669"/>
    <property type="project" value="TreeGrafter"/>
</dbReference>
<dbReference type="CDD" id="cd07943">
    <property type="entry name" value="DRE_TIM_HOA"/>
    <property type="match status" value="1"/>
</dbReference>
<dbReference type="FunFam" id="1.10.8.60:FF:000042">
    <property type="entry name" value="4-hydroxy-2-oxovalerate aldolase"/>
    <property type="match status" value="1"/>
</dbReference>
<dbReference type="FunFam" id="3.20.20.70:FF:000072">
    <property type="entry name" value="4-hydroxy-2-oxovalerate aldolase"/>
    <property type="match status" value="1"/>
</dbReference>
<dbReference type="Gene3D" id="1.10.8.60">
    <property type="match status" value="1"/>
</dbReference>
<dbReference type="Gene3D" id="3.20.20.70">
    <property type="entry name" value="Aldolase class I"/>
    <property type="match status" value="1"/>
</dbReference>
<dbReference type="HAMAP" id="MF_01656">
    <property type="entry name" value="HOA"/>
    <property type="match status" value="1"/>
</dbReference>
<dbReference type="InterPro" id="IPR050073">
    <property type="entry name" value="2-IPM_HCS-like"/>
</dbReference>
<dbReference type="InterPro" id="IPR017629">
    <property type="entry name" value="4OH_2_O-val_aldolase"/>
</dbReference>
<dbReference type="InterPro" id="IPR013785">
    <property type="entry name" value="Aldolase_TIM"/>
</dbReference>
<dbReference type="InterPro" id="IPR012425">
    <property type="entry name" value="DmpG_comm"/>
</dbReference>
<dbReference type="InterPro" id="IPR035685">
    <property type="entry name" value="DRE_TIM_HOA"/>
</dbReference>
<dbReference type="InterPro" id="IPR000891">
    <property type="entry name" value="PYR_CT"/>
</dbReference>
<dbReference type="NCBIfam" id="TIGR03217">
    <property type="entry name" value="4OH_2_O_val_ald"/>
    <property type="match status" value="1"/>
</dbReference>
<dbReference type="NCBIfam" id="NF006049">
    <property type="entry name" value="PRK08195.1"/>
    <property type="match status" value="1"/>
</dbReference>
<dbReference type="PANTHER" id="PTHR10277:SF9">
    <property type="entry name" value="2-ISOPROPYLMALATE SYNTHASE 1, CHLOROPLASTIC-RELATED"/>
    <property type="match status" value="1"/>
</dbReference>
<dbReference type="PANTHER" id="PTHR10277">
    <property type="entry name" value="HOMOCITRATE SYNTHASE-RELATED"/>
    <property type="match status" value="1"/>
</dbReference>
<dbReference type="Pfam" id="PF07836">
    <property type="entry name" value="DmpG_comm"/>
    <property type="match status" value="1"/>
</dbReference>
<dbReference type="Pfam" id="PF00682">
    <property type="entry name" value="HMGL-like"/>
    <property type="match status" value="1"/>
</dbReference>
<dbReference type="SUPFAM" id="SSF51569">
    <property type="entry name" value="Aldolase"/>
    <property type="match status" value="1"/>
</dbReference>
<dbReference type="SUPFAM" id="SSF89000">
    <property type="entry name" value="post-HMGL domain-like"/>
    <property type="match status" value="1"/>
</dbReference>
<dbReference type="PROSITE" id="PS50991">
    <property type="entry name" value="PYR_CT"/>
    <property type="match status" value="1"/>
</dbReference>
<organism>
    <name type="scientific">Escherichia coli O8 (strain IAI1)</name>
    <dbReference type="NCBI Taxonomy" id="585034"/>
    <lineage>
        <taxon>Bacteria</taxon>
        <taxon>Pseudomonadati</taxon>
        <taxon>Pseudomonadota</taxon>
        <taxon>Gammaproteobacteria</taxon>
        <taxon>Enterobacterales</taxon>
        <taxon>Enterobacteriaceae</taxon>
        <taxon>Escherichia</taxon>
    </lineage>
</organism>
<proteinExistence type="inferred from homology"/>
<feature type="chain" id="PRO_0000387832" description="4-hydroxy-2-oxovalerate aldolase">
    <location>
        <begin position="1"/>
        <end position="337"/>
    </location>
</feature>
<feature type="domain" description="Pyruvate carboxyltransferase" evidence="1">
    <location>
        <begin position="6"/>
        <end position="258"/>
    </location>
</feature>
<feature type="active site" description="Proton acceptor" evidence="1">
    <location>
        <position position="18"/>
    </location>
</feature>
<feature type="binding site" evidence="1">
    <location>
        <begin position="14"/>
        <end position="15"/>
    </location>
    <ligand>
        <name>substrate</name>
    </ligand>
</feature>
<feature type="binding site" evidence="1">
    <location>
        <position position="15"/>
    </location>
    <ligand>
        <name>Mn(2+)</name>
        <dbReference type="ChEBI" id="CHEBI:29035"/>
    </ligand>
</feature>
<feature type="binding site" evidence="1">
    <location>
        <position position="168"/>
    </location>
    <ligand>
        <name>substrate</name>
    </ligand>
</feature>
<feature type="binding site" evidence="1">
    <location>
        <position position="197"/>
    </location>
    <ligand>
        <name>Mn(2+)</name>
        <dbReference type="ChEBI" id="CHEBI:29035"/>
    </ligand>
</feature>
<feature type="binding site" evidence="1">
    <location>
        <position position="197"/>
    </location>
    <ligand>
        <name>substrate</name>
    </ligand>
</feature>
<feature type="binding site" evidence="1">
    <location>
        <position position="199"/>
    </location>
    <ligand>
        <name>Mn(2+)</name>
        <dbReference type="ChEBI" id="CHEBI:29035"/>
    </ligand>
</feature>
<feature type="binding site" evidence="1">
    <location>
        <position position="288"/>
    </location>
    <ligand>
        <name>substrate</name>
    </ligand>
</feature>
<feature type="site" description="Transition state stabilizer" evidence="1">
    <location>
        <position position="14"/>
    </location>
</feature>
<sequence>MNGKKLYISDVTLRDGMHAIRHQYSLENVRQIAKALDDARVDSIEVAHGDGLQGSSFNYGFGAHSDLEWIEAAADVVKHAKIATLLLPGIGTIHDLKNAWQAGARVVRVATHCTEADVSAQHIQYARELGMDTVGFLMMSHMTTPENLAKQAKLMEGYGATCIYVVDSGGAMNMSDIRDRFRALKAELKPETQTGMHAHHNLSLGVANSIAAVEEGCDRIDASLAGMGAGAGNAPLEVFIAAADKLGWQHGTDLYALMDAADDLVRPLQDRPVRVDRETLALGYAGVYSSFLRHCETAAARYGLSAVDILVELGKRRMVGGQEDMIVDVALDLRNNK</sequence>